<comment type="function">
    <text evidence="1">Specifically methylates guanosine-37 in various tRNAs.</text>
</comment>
<comment type="catalytic activity">
    <reaction evidence="1">
        <text>guanosine(37) in tRNA + S-adenosyl-L-methionine = N(1)-methylguanosine(37) in tRNA + S-adenosyl-L-homocysteine + H(+)</text>
        <dbReference type="Rhea" id="RHEA:36899"/>
        <dbReference type="Rhea" id="RHEA-COMP:10145"/>
        <dbReference type="Rhea" id="RHEA-COMP:10147"/>
        <dbReference type="ChEBI" id="CHEBI:15378"/>
        <dbReference type="ChEBI" id="CHEBI:57856"/>
        <dbReference type="ChEBI" id="CHEBI:59789"/>
        <dbReference type="ChEBI" id="CHEBI:73542"/>
        <dbReference type="ChEBI" id="CHEBI:74269"/>
        <dbReference type="EC" id="2.1.1.228"/>
    </reaction>
</comment>
<comment type="subunit">
    <text evidence="1">Homodimer.</text>
</comment>
<comment type="subcellular location">
    <subcellularLocation>
        <location evidence="1">Cytoplasm</location>
    </subcellularLocation>
</comment>
<comment type="similarity">
    <text evidence="1">Belongs to the RNA methyltransferase TrmD family.</text>
</comment>
<evidence type="ECO:0000255" key="1">
    <source>
        <dbReference type="HAMAP-Rule" id="MF_00605"/>
    </source>
</evidence>
<reference key="1">
    <citation type="submission" date="2009-02" db="EMBL/GenBank/DDBJ databases">
        <title>Vibrio splendidus str. LGP32 complete genome.</title>
        <authorList>
            <person name="Mazel D."/>
            <person name="Le Roux F."/>
        </authorList>
    </citation>
    <scope>NUCLEOTIDE SEQUENCE [LARGE SCALE GENOMIC DNA]</scope>
    <source>
        <strain>LGP32</strain>
    </source>
</reference>
<organism>
    <name type="scientific">Vibrio atlanticus (strain LGP32)</name>
    <name type="common">Vibrio splendidus (strain Mel32)</name>
    <dbReference type="NCBI Taxonomy" id="575788"/>
    <lineage>
        <taxon>Bacteria</taxon>
        <taxon>Pseudomonadati</taxon>
        <taxon>Pseudomonadota</taxon>
        <taxon>Gammaproteobacteria</taxon>
        <taxon>Vibrionales</taxon>
        <taxon>Vibrionaceae</taxon>
        <taxon>Vibrio</taxon>
    </lineage>
</organism>
<keyword id="KW-0963">Cytoplasm</keyword>
<keyword id="KW-0489">Methyltransferase</keyword>
<keyword id="KW-0949">S-adenosyl-L-methionine</keyword>
<keyword id="KW-0808">Transferase</keyword>
<keyword id="KW-0819">tRNA processing</keyword>
<feature type="chain" id="PRO_1000198594" description="tRNA (guanine-N(1)-)-methyltransferase">
    <location>
        <begin position="1"/>
        <end position="246"/>
    </location>
</feature>
<feature type="binding site" evidence="1">
    <location>
        <position position="113"/>
    </location>
    <ligand>
        <name>S-adenosyl-L-methionine</name>
        <dbReference type="ChEBI" id="CHEBI:59789"/>
    </ligand>
</feature>
<feature type="binding site" evidence="1">
    <location>
        <begin position="133"/>
        <end position="138"/>
    </location>
    <ligand>
        <name>S-adenosyl-L-methionine</name>
        <dbReference type="ChEBI" id="CHEBI:59789"/>
    </ligand>
</feature>
<gene>
    <name evidence="1" type="primary">trmD</name>
    <name type="ordered locus">VS_2556</name>
</gene>
<protein>
    <recommendedName>
        <fullName evidence="1">tRNA (guanine-N(1)-)-methyltransferase</fullName>
        <ecNumber evidence="1">2.1.1.228</ecNumber>
    </recommendedName>
    <alternativeName>
        <fullName evidence="1">M1G-methyltransferase</fullName>
    </alternativeName>
    <alternativeName>
        <fullName evidence="1">tRNA [GM37] methyltransferase</fullName>
    </alternativeName>
</protein>
<proteinExistence type="inferred from homology"/>
<sequence>MWVGIISLFPEMFRSVTDFGVTGQAVKKGLLSIETWNPRDFTHDKHRTVDDRPYGGGPGMLMMVQPLRDAIQTAKQAAPGKTKVIYLSPQGRKLDQQGVEELATNENLLLICGRYEGVDERIIQSEVDEEWSIGDFVMTGGELPAMTLIDSVSRFVPGVLGDFASAEEDSFANGLLDCPHYTRPEVLDDKDVPSVLKSGNHKDIRRWRLKQSLGRTWLRRPELLENLALTDEQEQLLAEFIKEQRS</sequence>
<accession>B7VK27</accession>
<dbReference type="EC" id="2.1.1.228" evidence="1"/>
<dbReference type="EMBL" id="FM954972">
    <property type="protein sequence ID" value="CAV19733.1"/>
    <property type="molecule type" value="Genomic_DNA"/>
</dbReference>
<dbReference type="SMR" id="B7VK27"/>
<dbReference type="STRING" id="575788.VS_2556"/>
<dbReference type="KEGG" id="vsp:VS_2556"/>
<dbReference type="eggNOG" id="COG0336">
    <property type="taxonomic scope" value="Bacteria"/>
</dbReference>
<dbReference type="HOGENOM" id="CLU_047363_0_1_6"/>
<dbReference type="Proteomes" id="UP000009100">
    <property type="component" value="Chromosome 1"/>
</dbReference>
<dbReference type="GO" id="GO:0005829">
    <property type="term" value="C:cytosol"/>
    <property type="evidence" value="ECO:0007669"/>
    <property type="project" value="TreeGrafter"/>
</dbReference>
<dbReference type="GO" id="GO:0052906">
    <property type="term" value="F:tRNA (guanine(37)-N1)-methyltransferase activity"/>
    <property type="evidence" value="ECO:0007669"/>
    <property type="project" value="UniProtKB-UniRule"/>
</dbReference>
<dbReference type="GO" id="GO:0002939">
    <property type="term" value="P:tRNA N1-guanine methylation"/>
    <property type="evidence" value="ECO:0007669"/>
    <property type="project" value="TreeGrafter"/>
</dbReference>
<dbReference type="CDD" id="cd18080">
    <property type="entry name" value="TrmD-like"/>
    <property type="match status" value="1"/>
</dbReference>
<dbReference type="FunFam" id="1.10.1270.20:FF:000001">
    <property type="entry name" value="tRNA (guanine-N(1)-)-methyltransferase"/>
    <property type="match status" value="1"/>
</dbReference>
<dbReference type="FunFam" id="3.40.1280.10:FF:000001">
    <property type="entry name" value="tRNA (guanine-N(1)-)-methyltransferase"/>
    <property type="match status" value="1"/>
</dbReference>
<dbReference type="Gene3D" id="3.40.1280.10">
    <property type="match status" value="1"/>
</dbReference>
<dbReference type="Gene3D" id="1.10.1270.20">
    <property type="entry name" value="tRNA(m1g37)methyltransferase, domain 2"/>
    <property type="match status" value="1"/>
</dbReference>
<dbReference type="HAMAP" id="MF_00605">
    <property type="entry name" value="TrmD"/>
    <property type="match status" value="1"/>
</dbReference>
<dbReference type="InterPro" id="IPR029028">
    <property type="entry name" value="Alpha/beta_knot_MTases"/>
</dbReference>
<dbReference type="InterPro" id="IPR023148">
    <property type="entry name" value="tRNA_m1G_MeTrfase_C_sf"/>
</dbReference>
<dbReference type="InterPro" id="IPR002649">
    <property type="entry name" value="tRNA_m1G_MeTrfase_TrmD"/>
</dbReference>
<dbReference type="InterPro" id="IPR029026">
    <property type="entry name" value="tRNA_m1G_MTases_N"/>
</dbReference>
<dbReference type="InterPro" id="IPR016009">
    <property type="entry name" value="tRNA_MeTrfase_TRMD/TRM10"/>
</dbReference>
<dbReference type="NCBIfam" id="NF000648">
    <property type="entry name" value="PRK00026.1"/>
    <property type="match status" value="1"/>
</dbReference>
<dbReference type="NCBIfam" id="TIGR00088">
    <property type="entry name" value="trmD"/>
    <property type="match status" value="1"/>
</dbReference>
<dbReference type="PANTHER" id="PTHR46417">
    <property type="entry name" value="TRNA (GUANINE-N(1)-)-METHYLTRANSFERASE"/>
    <property type="match status" value="1"/>
</dbReference>
<dbReference type="PANTHER" id="PTHR46417:SF1">
    <property type="entry name" value="TRNA (GUANINE-N(1)-)-METHYLTRANSFERASE"/>
    <property type="match status" value="1"/>
</dbReference>
<dbReference type="Pfam" id="PF01746">
    <property type="entry name" value="tRNA_m1G_MT"/>
    <property type="match status" value="1"/>
</dbReference>
<dbReference type="PIRSF" id="PIRSF000386">
    <property type="entry name" value="tRNA_mtase"/>
    <property type="match status" value="1"/>
</dbReference>
<dbReference type="SUPFAM" id="SSF75217">
    <property type="entry name" value="alpha/beta knot"/>
    <property type="match status" value="1"/>
</dbReference>
<name>TRMD_VIBA3</name>